<evidence type="ECO:0000255" key="1">
    <source>
        <dbReference type="HAMAP-Rule" id="MF_01132"/>
    </source>
</evidence>
<sequence length="131" mass="15441">MVTLFTSPSCTSCRKAKAWLQEHDIPYTERNIFSEHLTIDEIKQILKMTEDGTDEIISTRSKTYQKLNVDIDSLPLQDLYSIIQDNPGLLRRPIILDNKRLQVGYNEDEIRRFLPRKVRTFQLQEAQRMVD</sequence>
<reference key="1">
    <citation type="journal article" date="2004" name="Proc. Natl. Acad. Sci. U.S.A.">
        <title>Complete genomes of two clinical Staphylococcus aureus strains: evidence for the rapid evolution of virulence and drug resistance.</title>
        <authorList>
            <person name="Holden M.T.G."/>
            <person name="Feil E.J."/>
            <person name="Lindsay J.A."/>
            <person name="Peacock S.J."/>
            <person name="Day N.P.J."/>
            <person name="Enright M.C."/>
            <person name="Foster T.J."/>
            <person name="Moore C.E."/>
            <person name="Hurst L."/>
            <person name="Atkin R."/>
            <person name="Barron A."/>
            <person name="Bason N."/>
            <person name="Bentley S.D."/>
            <person name="Chillingworth C."/>
            <person name="Chillingworth T."/>
            <person name="Churcher C."/>
            <person name="Clark L."/>
            <person name="Corton C."/>
            <person name="Cronin A."/>
            <person name="Doggett J."/>
            <person name="Dowd L."/>
            <person name="Feltwell T."/>
            <person name="Hance Z."/>
            <person name="Harris B."/>
            <person name="Hauser H."/>
            <person name="Holroyd S."/>
            <person name="Jagels K."/>
            <person name="James K.D."/>
            <person name="Lennard N."/>
            <person name="Line A."/>
            <person name="Mayes R."/>
            <person name="Moule S."/>
            <person name="Mungall K."/>
            <person name="Ormond D."/>
            <person name="Quail M.A."/>
            <person name="Rabbinowitsch E."/>
            <person name="Rutherford K.M."/>
            <person name="Sanders M."/>
            <person name="Sharp S."/>
            <person name="Simmonds M."/>
            <person name="Stevens K."/>
            <person name="Whitehead S."/>
            <person name="Barrell B.G."/>
            <person name="Spratt B.G."/>
            <person name="Parkhill J."/>
        </authorList>
    </citation>
    <scope>NUCLEOTIDE SEQUENCE [LARGE SCALE GENOMIC DNA]</scope>
    <source>
        <strain>MSSA476</strain>
    </source>
</reference>
<comment type="function">
    <text evidence="1">Global transcriptional regulator that plays a key role in stress response and exerts either positive or negative regulation of genes. Acts by interacting with the C-terminal domain of the alpha subunit of the RNA polymerase (RNAP). This interaction can enhance binding of RNAP to the promoter region of target genes and stimulate their transcription, or block interaction of RNAP with activator.</text>
</comment>
<comment type="subunit">
    <text evidence="1">Interacts with the C-terminal domain of the alpha subunit of the RNAP.</text>
</comment>
<comment type="subcellular location">
    <subcellularLocation>
        <location evidence="1">Cytoplasm</location>
    </subcellularLocation>
</comment>
<comment type="similarity">
    <text evidence="1">Belongs to the ArsC family. Spx subfamily.</text>
</comment>
<name>SPX_STAAS</name>
<feature type="chain" id="PRO_0000162566" description="Global transcriptional regulator Spx">
    <location>
        <begin position="1"/>
        <end position="131"/>
    </location>
</feature>
<feature type="disulfide bond" description="Redox-active" evidence="1">
    <location>
        <begin position="10"/>
        <end position="13"/>
    </location>
</feature>
<proteinExistence type="inferred from homology"/>
<keyword id="KW-0963">Cytoplasm</keyword>
<keyword id="KW-1015">Disulfide bond</keyword>
<keyword id="KW-0676">Redox-active center</keyword>
<keyword id="KW-0804">Transcription</keyword>
<keyword id="KW-0805">Transcription regulation</keyword>
<organism>
    <name type="scientific">Staphylococcus aureus (strain MSSA476)</name>
    <dbReference type="NCBI Taxonomy" id="282459"/>
    <lineage>
        <taxon>Bacteria</taxon>
        <taxon>Bacillati</taxon>
        <taxon>Bacillota</taxon>
        <taxon>Bacilli</taxon>
        <taxon>Bacillales</taxon>
        <taxon>Staphylococcaceae</taxon>
        <taxon>Staphylococcus</taxon>
    </lineage>
</organism>
<protein>
    <recommendedName>
        <fullName evidence="1">Global transcriptional regulator Spx</fullName>
    </recommendedName>
</protein>
<accession>Q6GAS9</accession>
<gene>
    <name evidence="1" type="primary">spx</name>
    <name type="ordered locus">SAS0867</name>
</gene>
<dbReference type="EMBL" id="BX571857">
    <property type="protein sequence ID" value="CAG42642.1"/>
    <property type="molecule type" value="Genomic_DNA"/>
</dbReference>
<dbReference type="SMR" id="Q6GAS9"/>
<dbReference type="KEGG" id="sas:SAS0867"/>
<dbReference type="HOGENOM" id="CLU_116644_1_1_9"/>
<dbReference type="GO" id="GO:0005737">
    <property type="term" value="C:cytoplasm"/>
    <property type="evidence" value="ECO:0007669"/>
    <property type="project" value="UniProtKB-SubCell"/>
</dbReference>
<dbReference type="GO" id="GO:0045892">
    <property type="term" value="P:negative regulation of DNA-templated transcription"/>
    <property type="evidence" value="ECO:0007669"/>
    <property type="project" value="InterPro"/>
</dbReference>
<dbReference type="CDD" id="cd03032">
    <property type="entry name" value="ArsC_Spx"/>
    <property type="match status" value="1"/>
</dbReference>
<dbReference type="Gene3D" id="3.40.30.10">
    <property type="entry name" value="Glutaredoxin"/>
    <property type="match status" value="1"/>
</dbReference>
<dbReference type="HAMAP" id="MF_01132">
    <property type="entry name" value="Spx"/>
    <property type="match status" value="1"/>
</dbReference>
<dbReference type="InterPro" id="IPR006660">
    <property type="entry name" value="Arsenate_reductase-like"/>
</dbReference>
<dbReference type="InterPro" id="IPR023731">
    <property type="entry name" value="Spx"/>
</dbReference>
<dbReference type="InterPro" id="IPR036249">
    <property type="entry name" value="Thioredoxin-like_sf"/>
</dbReference>
<dbReference type="InterPro" id="IPR006504">
    <property type="entry name" value="Tscrpt_reg_Spx/MgsR"/>
</dbReference>
<dbReference type="NCBIfam" id="TIGR01617">
    <property type="entry name" value="arsC_related"/>
    <property type="match status" value="1"/>
</dbReference>
<dbReference type="NCBIfam" id="NF002459">
    <property type="entry name" value="PRK01655.1"/>
    <property type="match status" value="1"/>
</dbReference>
<dbReference type="NCBIfam" id="NF009210">
    <property type="entry name" value="PRK12559.1"/>
    <property type="match status" value="1"/>
</dbReference>
<dbReference type="PANTHER" id="PTHR30041">
    <property type="entry name" value="ARSENATE REDUCTASE"/>
    <property type="match status" value="1"/>
</dbReference>
<dbReference type="PANTHER" id="PTHR30041:SF7">
    <property type="entry name" value="GLOBAL TRANSCRIPTIONAL REGULATOR SPX"/>
    <property type="match status" value="1"/>
</dbReference>
<dbReference type="Pfam" id="PF03960">
    <property type="entry name" value="ArsC"/>
    <property type="match status" value="1"/>
</dbReference>
<dbReference type="SUPFAM" id="SSF52833">
    <property type="entry name" value="Thioredoxin-like"/>
    <property type="match status" value="1"/>
</dbReference>
<dbReference type="PROSITE" id="PS51353">
    <property type="entry name" value="ARSC"/>
    <property type="match status" value="1"/>
</dbReference>